<dbReference type="EC" id="3.5.4.33" evidence="3"/>
<dbReference type="EMBL" id="BC122084">
    <property type="protein sequence ID" value="AAI22085.1"/>
    <property type="molecule type" value="mRNA"/>
</dbReference>
<dbReference type="RefSeq" id="NP_001072562.1">
    <property type="nucleotide sequence ID" value="NM_001079094.1"/>
</dbReference>
<dbReference type="SMR" id="Q0P4H0"/>
<dbReference type="FunCoup" id="Q0P4H0">
    <property type="interactions" value="1312"/>
</dbReference>
<dbReference type="STRING" id="8364.ENSXETP00000030728"/>
<dbReference type="PaxDb" id="8364-ENSXETP00000021557"/>
<dbReference type="DNASU" id="780017"/>
<dbReference type="GeneID" id="780017"/>
<dbReference type="KEGG" id="xtr:780017"/>
<dbReference type="AGR" id="Xenbase:XB-GENE-963029"/>
<dbReference type="CTD" id="134637"/>
<dbReference type="Xenbase" id="XB-GENE-963029">
    <property type="gene designation" value="adat2"/>
</dbReference>
<dbReference type="eggNOG" id="KOG1018">
    <property type="taxonomic scope" value="Eukaryota"/>
</dbReference>
<dbReference type="InParanoid" id="Q0P4H0"/>
<dbReference type="OrthoDB" id="408702at2759"/>
<dbReference type="Proteomes" id="UP000008143">
    <property type="component" value="Chromosome 5"/>
</dbReference>
<dbReference type="GO" id="GO:0052717">
    <property type="term" value="F:tRNA-specific adenosine-34 deaminase activity"/>
    <property type="evidence" value="ECO:0007669"/>
    <property type="project" value="UniProtKB-EC"/>
</dbReference>
<dbReference type="GO" id="GO:0008270">
    <property type="term" value="F:zinc ion binding"/>
    <property type="evidence" value="ECO:0007669"/>
    <property type="project" value="InterPro"/>
</dbReference>
<dbReference type="GO" id="GO:0002100">
    <property type="term" value="P:tRNA wobble adenosine to inosine editing"/>
    <property type="evidence" value="ECO:0007669"/>
    <property type="project" value="InterPro"/>
</dbReference>
<dbReference type="CDD" id="cd01285">
    <property type="entry name" value="nucleoside_deaminase"/>
    <property type="match status" value="1"/>
</dbReference>
<dbReference type="FunFam" id="3.40.140.10:FF:000036">
    <property type="entry name" value="tRNA-specific adenosine deaminase 2"/>
    <property type="match status" value="1"/>
</dbReference>
<dbReference type="Gene3D" id="3.40.140.10">
    <property type="entry name" value="Cytidine Deaminase, domain 2"/>
    <property type="match status" value="1"/>
</dbReference>
<dbReference type="HAMAP" id="MF_00972">
    <property type="entry name" value="tRNA_aden_deaminase"/>
    <property type="match status" value="1"/>
</dbReference>
<dbReference type="InterPro" id="IPR016192">
    <property type="entry name" value="APOBEC/CMP_deaminase_Zn-bd"/>
</dbReference>
<dbReference type="InterPro" id="IPR002125">
    <property type="entry name" value="CMP_dCMP_dom"/>
</dbReference>
<dbReference type="InterPro" id="IPR016193">
    <property type="entry name" value="Cytidine_deaminase-like"/>
</dbReference>
<dbReference type="InterPro" id="IPR028883">
    <property type="entry name" value="tRNA_aden_deaminase"/>
</dbReference>
<dbReference type="PANTHER" id="PTHR11079">
    <property type="entry name" value="CYTOSINE DEAMINASE FAMILY MEMBER"/>
    <property type="match status" value="1"/>
</dbReference>
<dbReference type="PANTHER" id="PTHR11079:SF149">
    <property type="entry name" value="TRNA-SPECIFIC ADENOSINE DEAMINASE 2"/>
    <property type="match status" value="1"/>
</dbReference>
<dbReference type="Pfam" id="PF14437">
    <property type="entry name" value="MafB19-deam"/>
    <property type="match status" value="1"/>
</dbReference>
<dbReference type="SUPFAM" id="SSF53927">
    <property type="entry name" value="Cytidine deaminase-like"/>
    <property type="match status" value="1"/>
</dbReference>
<dbReference type="PROSITE" id="PS00903">
    <property type="entry name" value="CYT_DCMP_DEAMINASES_1"/>
    <property type="match status" value="1"/>
</dbReference>
<dbReference type="PROSITE" id="PS51747">
    <property type="entry name" value="CYT_DCMP_DEAMINASES_2"/>
    <property type="match status" value="1"/>
</dbReference>
<sequence>MTEEIQNWMHKAFQMAQDALNNGEVPVGCLMVYDNQVVGKGRNEVNETKNATRHAEMVAIDQVLDWCEKNSKKSRDVFENIVLYVTVEPCIMCAGALRLLKIPLVVYGCRNERFGGCGSVLNVAGDNIPDTGTEFKYIGGYQAEKAVELLKTFYKQENPNAPRSKVRKKE</sequence>
<evidence type="ECO:0000250" key="1"/>
<evidence type="ECO:0000255" key="2">
    <source>
        <dbReference type="PROSITE-ProRule" id="PRU01083"/>
    </source>
</evidence>
<evidence type="ECO:0000305" key="3"/>
<organism>
    <name type="scientific">Xenopus tropicalis</name>
    <name type="common">Western clawed frog</name>
    <name type="synonym">Silurana tropicalis</name>
    <dbReference type="NCBI Taxonomy" id="8364"/>
    <lineage>
        <taxon>Eukaryota</taxon>
        <taxon>Metazoa</taxon>
        <taxon>Chordata</taxon>
        <taxon>Craniata</taxon>
        <taxon>Vertebrata</taxon>
        <taxon>Euteleostomi</taxon>
        <taxon>Amphibia</taxon>
        <taxon>Batrachia</taxon>
        <taxon>Anura</taxon>
        <taxon>Pipoidea</taxon>
        <taxon>Pipidae</taxon>
        <taxon>Xenopodinae</taxon>
        <taxon>Xenopus</taxon>
        <taxon>Silurana</taxon>
    </lineage>
</organism>
<name>ADAT2_XENTR</name>
<protein>
    <recommendedName>
        <fullName>tRNA-specific adenosine deaminase 2</fullName>
        <ecNumber evidence="3">3.5.4.33</ecNumber>
    </recommendedName>
    <alternativeName>
        <fullName>Deaminase domain-containing protein 1</fullName>
    </alternativeName>
    <alternativeName>
        <fullName>tRNA-specific adenosine-34 deaminase subunit ADAT2</fullName>
    </alternativeName>
</protein>
<keyword id="KW-0378">Hydrolase</keyword>
<keyword id="KW-0479">Metal-binding</keyword>
<keyword id="KW-1185">Reference proteome</keyword>
<keyword id="KW-0819">tRNA processing</keyword>
<keyword id="KW-0862">Zinc</keyword>
<feature type="chain" id="PRO_0000287657" description="tRNA-specific adenosine deaminase 2">
    <location>
        <begin position="1"/>
        <end position="170"/>
    </location>
</feature>
<feature type="domain" description="CMP/dCMP-type deaminase" evidence="2">
    <location>
        <begin position="3"/>
        <end position="128"/>
    </location>
</feature>
<feature type="active site" description="Proton donor" evidence="1">
    <location>
        <position position="56"/>
    </location>
</feature>
<feature type="binding site" evidence="1">
    <location>
        <position position="54"/>
    </location>
    <ligand>
        <name>Zn(2+)</name>
        <dbReference type="ChEBI" id="CHEBI:29105"/>
        <note>catalytic</note>
    </ligand>
</feature>
<feature type="binding site" evidence="1">
    <location>
        <position position="90"/>
    </location>
    <ligand>
        <name>Zn(2+)</name>
        <dbReference type="ChEBI" id="CHEBI:29105"/>
        <note>catalytic</note>
    </ligand>
</feature>
<feature type="binding site" evidence="1">
    <location>
        <position position="93"/>
    </location>
    <ligand>
        <name>Zn(2+)</name>
        <dbReference type="ChEBI" id="CHEBI:29105"/>
        <note>catalytic</note>
    </ligand>
</feature>
<proteinExistence type="evidence at transcript level"/>
<comment type="function">
    <text evidence="1">Probably participates in deamination of adenosine-34 to inosine in many tRNAs.</text>
</comment>
<comment type="catalytic activity">
    <reaction evidence="3">
        <text>adenosine(34) in tRNA + H2O + H(+) = inosine(34) in tRNA + NH4(+)</text>
        <dbReference type="Rhea" id="RHEA:43168"/>
        <dbReference type="Rhea" id="RHEA-COMP:10373"/>
        <dbReference type="Rhea" id="RHEA-COMP:10374"/>
        <dbReference type="ChEBI" id="CHEBI:15377"/>
        <dbReference type="ChEBI" id="CHEBI:15378"/>
        <dbReference type="ChEBI" id="CHEBI:28938"/>
        <dbReference type="ChEBI" id="CHEBI:74411"/>
        <dbReference type="ChEBI" id="CHEBI:82852"/>
        <dbReference type="EC" id="3.5.4.33"/>
    </reaction>
</comment>
<comment type="cofactor">
    <cofactor evidence="1">
        <name>Zn(2+)</name>
        <dbReference type="ChEBI" id="CHEBI:29105"/>
    </cofactor>
</comment>
<comment type="similarity">
    <text evidence="3">Belongs to the cytidine and deoxycytidylate deaminase family. ADAT2 subfamily.</text>
</comment>
<gene>
    <name type="primary">adat2</name>
    <name type="synonym">deadc1</name>
</gene>
<reference key="1">
    <citation type="submission" date="2006-08" db="EMBL/GenBank/DDBJ databases">
        <authorList>
            <consortium name="NIH - Xenopus Gene Collection (XGC) project"/>
        </authorList>
    </citation>
    <scope>NUCLEOTIDE SEQUENCE [LARGE SCALE MRNA]</scope>
    <source>
        <strain>N6</strain>
        <tissue>Oviduct</tissue>
    </source>
</reference>
<accession>Q0P4H0</accession>